<reference key="1">
    <citation type="journal article" date="2008" name="J. Bacteriol.">
        <title>Complete genome sequence of uropathogenic Proteus mirabilis, a master of both adherence and motility.</title>
        <authorList>
            <person name="Pearson M.M."/>
            <person name="Sebaihia M."/>
            <person name="Churcher C."/>
            <person name="Quail M.A."/>
            <person name="Seshasayee A.S."/>
            <person name="Luscombe N.M."/>
            <person name="Abdellah Z."/>
            <person name="Arrosmith C."/>
            <person name="Atkin B."/>
            <person name="Chillingworth T."/>
            <person name="Hauser H."/>
            <person name="Jagels K."/>
            <person name="Moule S."/>
            <person name="Mungall K."/>
            <person name="Norbertczak H."/>
            <person name="Rabbinowitsch E."/>
            <person name="Walker D."/>
            <person name="Whithead S."/>
            <person name="Thomson N.R."/>
            <person name="Rather P.N."/>
            <person name="Parkhill J."/>
            <person name="Mobley H.L.T."/>
        </authorList>
    </citation>
    <scope>NUCLEOTIDE SEQUENCE [LARGE SCALE GENOMIC DNA]</scope>
    <source>
        <strain>HI4320</strain>
    </source>
</reference>
<name>RISB_PROMH</name>
<sequence length="156" mass="16315">MNVIKGVVAAPNARVAIAIARFNNFINDSLLEGAVDALERIGQVSSENITVVWVPGAYELPLTVKALVESDKYDAVIALGTVIRGGTAHFEYVAGECSSGLSHVAMQSEIPVTFGVLTTESIEQAIERAGTKAGNKGAEAAMTALEMINVLKAIKG</sequence>
<organism>
    <name type="scientific">Proteus mirabilis (strain HI4320)</name>
    <dbReference type="NCBI Taxonomy" id="529507"/>
    <lineage>
        <taxon>Bacteria</taxon>
        <taxon>Pseudomonadati</taxon>
        <taxon>Pseudomonadota</taxon>
        <taxon>Gammaproteobacteria</taxon>
        <taxon>Enterobacterales</taxon>
        <taxon>Morganellaceae</taxon>
        <taxon>Proteus</taxon>
    </lineage>
</organism>
<dbReference type="EC" id="2.5.1.78" evidence="1"/>
<dbReference type="EMBL" id="AM942759">
    <property type="protein sequence ID" value="CAR40327.1"/>
    <property type="molecule type" value="Genomic_DNA"/>
</dbReference>
<dbReference type="RefSeq" id="WP_012367468.1">
    <property type="nucleotide sequence ID" value="NC_010554.1"/>
</dbReference>
<dbReference type="SMR" id="B4EU19"/>
<dbReference type="EnsemblBacteria" id="CAR40327">
    <property type="protein sequence ID" value="CAR40327"/>
    <property type="gene ID" value="PMI0082"/>
</dbReference>
<dbReference type="GeneID" id="6802412"/>
<dbReference type="KEGG" id="pmr:PMI0082"/>
<dbReference type="PATRIC" id="fig|529507.6.peg.82"/>
<dbReference type="eggNOG" id="COG0054">
    <property type="taxonomic scope" value="Bacteria"/>
</dbReference>
<dbReference type="HOGENOM" id="CLU_089358_1_1_6"/>
<dbReference type="UniPathway" id="UPA00275">
    <property type="reaction ID" value="UER00404"/>
</dbReference>
<dbReference type="Proteomes" id="UP000008319">
    <property type="component" value="Chromosome"/>
</dbReference>
<dbReference type="GO" id="GO:0005829">
    <property type="term" value="C:cytosol"/>
    <property type="evidence" value="ECO:0007669"/>
    <property type="project" value="TreeGrafter"/>
</dbReference>
<dbReference type="GO" id="GO:0009349">
    <property type="term" value="C:riboflavin synthase complex"/>
    <property type="evidence" value="ECO:0007669"/>
    <property type="project" value="InterPro"/>
</dbReference>
<dbReference type="GO" id="GO:0000906">
    <property type="term" value="F:6,7-dimethyl-8-ribityllumazine synthase activity"/>
    <property type="evidence" value="ECO:0007669"/>
    <property type="project" value="UniProtKB-UniRule"/>
</dbReference>
<dbReference type="GO" id="GO:0009231">
    <property type="term" value="P:riboflavin biosynthetic process"/>
    <property type="evidence" value="ECO:0007669"/>
    <property type="project" value="UniProtKB-UniRule"/>
</dbReference>
<dbReference type="CDD" id="cd09209">
    <property type="entry name" value="Lumazine_synthase-I"/>
    <property type="match status" value="1"/>
</dbReference>
<dbReference type="FunFam" id="3.40.50.960:FF:000001">
    <property type="entry name" value="6,7-dimethyl-8-ribityllumazine synthase"/>
    <property type="match status" value="1"/>
</dbReference>
<dbReference type="Gene3D" id="3.40.50.960">
    <property type="entry name" value="Lumazine/riboflavin synthase"/>
    <property type="match status" value="1"/>
</dbReference>
<dbReference type="HAMAP" id="MF_00178">
    <property type="entry name" value="Lumazine_synth"/>
    <property type="match status" value="1"/>
</dbReference>
<dbReference type="InterPro" id="IPR034964">
    <property type="entry name" value="LS"/>
</dbReference>
<dbReference type="InterPro" id="IPR002180">
    <property type="entry name" value="LS/RS"/>
</dbReference>
<dbReference type="InterPro" id="IPR036467">
    <property type="entry name" value="LS/RS_sf"/>
</dbReference>
<dbReference type="NCBIfam" id="TIGR00114">
    <property type="entry name" value="lumazine-synth"/>
    <property type="match status" value="1"/>
</dbReference>
<dbReference type="NCBIfam" id="NF000812">
    <property type="entry name" value="PRK00061.1-4"/>
    <property type="match status" value="1"/>
</dbReference>
<dbReference type="PANTHER" id="PTHR21058:SF0">
    <property type="entry name" value="6,7-DIMETHYL-8-RIBITYLLUMAZINE SYNTHASE"/>
    <property type="match status" value="1"/>
</dbReference>
<dbReference type="PANTHER" id="PTHR21058">
    <property type="entry name" value="6,7-DIMETHYL-8-RIBITYLLUMAZINE SYNTHASE DMRL SYNTHASE LUMAZINE SYNTHASE"/>
    <property type="match status" value="1"/>
</dbReference>
<dbReference type="Pfam" id="PF00885">
    <property type="entry name" value="DMRL_synthase"/>
    <property type="match status" value="1"/>
</dbReference>
<dbReference type="SUPFAM" id="SSF52121">
    <property type="entry name" value="Lumazine synthase"/>
    <property type="match status" value="1"/>
</dbReference>
<accession>B4EU19</accession>
<gene>
    <name evidence="1" type="primary">ribH</name>
    <name type="ordered locus">PMI0082</name>
</gene>
<protein>
    <recommendedName>
        <fullName evidence="1">6,7-dimethyl-8-ribityllumazine synthase</fullName>
        <shortName evidence="1">DMRL synthase</shortName>
        <shortName evidence="1">LS</shortName>
        <shortName evidence="1">Lumazine synthase</shortName>
        <ecNumber evidence="1">2.5.1.78</ecNumber>
    </recommendedName>
</protein>
<proteinExistence type="inferred from homology"/>
<comment type="function">
    <text evidence="1">Catalyzes the formation of 6,7-dimethyl-8-ribityllumazine by condensation of 5-amino-6-(D-ribitylamino)uracil with 3,4-dihydroxy-2-butanone 4-phosphate. This is the penultimate step in the biosynthesis of riboflavin.</text>
</comment>
<comment type="catalytic activity">
    <reaction evidence="1">
        <text>(2S)-2-hydroxy-3-oxobutyl phosphate + 5-amino-6-(D-ribitylamino)uracil = 6,7-dimethyl-8-(1-D-ribityl)lumazine + phosphate + 2 H2O + H(+)</text>
        <dbReference type="Rhea" id="RHEA:26152"/>
        <dbReference type="ChEBI" id="CHEBI:15377"/>
        <dbReference type="ChEBI" id="CHEBI:15378"/>
        <dbReference type="ChEBI" id="CHEBI:15934"/>
        <dbReference type="ChEBI" id="CHEBI:43474"/>
        <dbReference type="ChEBI" id="CHEBI:58201"/>
        <dbReference type="ChEBI" id="CHEBI:58830"/>
        <dbReference type="EC" id="2.5.1.78"/>
    </reaction>
</comment>
<comment type="pathway">
    <text evidence="1">Cofactor biosynthesis; riboflavin biosynthesis; riboflavin from 2-hydroxy-3-oxobutyl phosphate and 5-amino-6-(D-ribitylamino)uracil: step 1/2.</text>
</comment>
<comment type="subunit">
    <text evidence="1">Forms an icosahedral capsid composed of 60 subunits, arranged as a dodecamer of pentamers.</text>
</comment>
<comment type="similarity">
    <text evidence="1">Belongs to the DMRL synthase family.</text>
</comment>
<keyword id="KW-1185">Reference proteome</keyword>
<keyword id="KW-0686">Riboflavin biosynthesis</keyword>
<keyword id="KW-0808">Transferase</keyword>
<evidence type="ECO:0000255" key="1">
    <source>
        <dbReference type="HAMAP-Rule" id="MF_00178"/>
    </source>
</evidence>
<feature type="chain" id="PRO_1000098219" description="6,7-dimethyl-8-ribityllumazine synthase">
    <location>
        <begin position="1"/>
        <end position="156"/>
    </location>
</feature>
<feature type="active site" description="Proton donor" evidence="1">
    <location>
        <position position="89"/>
    </location>
</feature>
<feature type="binding site" evidence="1">
    <location>
        <position position="22"/>
    </location>
    <ligand>
        <name>5-amino-6-(D-ribitylamino)uracil</name>
        <dbReference type="ChEBI" id="CHEBI:15934"/>
    </ligand>
</feature>
<feature type="binding site" evidence="1">
    <location>
        <begin position="57"/>
        <end position="59"/>
    </location>
    <ligand>
        <name>5-amino-6-(D-ribitylamino)uracil</name>
        <dbReference type="ChEBI" id="CHEBI:15934"/>
    </ligand>
</feature>
<feature type="binding site" evidence="1">
    <location>
        <begin position="81"/>
        <end position="83"/>
    </location>
    <ligand>
        <name>5-amino-6-(D-ribitylamino)uracil</name>
        <dbReference type="ChEBI" id="CHEBI:15934"/>
    </ligand>
</feature>
<feature type="binding site" evidence="1">
    <location>
        <begin position="86"/>
        <end position="87"/>
    </location>
    <ligand>
        <name>(2S)-2-hydroxy-3-oxobutyl phosphate</name>
        <dbReference type="ChEBI" id="CHEBI:58830"/>
    </ligand>
</feature>
<feature type="binding site" evidence="1">
    <location>
        <position position="114"/>
    </location>
    <ligand>
        <name>5-amino-6-(D-ribitylamino)uracil</name>
        <dbReference type="ChEBI" id="CHEBI:15934"/>
    </ligand>
</feature>
<feature type="binding site" evidence="1">
    <location>
        <position position="128"/>
    </location>
    <ligand>
        <name>(2S)-2-hydroxy-3-oxobutyl phosphate</name>
        <dbReference type="ChEBI" id="CHEBI:58830"/>
    </ligand>
</feature>